<keyword id="KW-1003">Cell membrane</keyword>
<keyword id="KW-0325">Glycoprotein</keyword>
<keyword id="KW-0406">Ion transport</keyword>
<keyword id="KW-0472">Membrane</keyword>
<keyword id="KW-1185">Reference proteome</keyword>
<keyword id="KW-0915">Sodium</keyword>
<keyword id="KW-0739">Sodium transport</keyword>
<keyword id="KW-0769">Symport</keyword>
<keyword id="KW-0812">Transmembrane</keyword>
<keyword id="KW-1133">Transmembrane helix</keyword>
<keyword id="KW-0813">Transport</keyword>
<dbReference type="EMBL" id="AF522186">
    <property type="protein sequence ID" value="AAN52081.1"/>
    <property type="molecule type" value="mRNA"/>
</dbReference>
<dbReference type="RefSeq" id="NP_733768.1">
    <property type="nucleotide sequence ID" value="NM_170668.3"/>
</dbReference>
<dbReference type="SMR" id="Q8CJ44"/>
<dbReference type="FunCoup" id="Q8CJ44">
    <property type="interactions" value="664"/>
</dbReference>
<dbReference type="STRING" id="10116.ENSRNOP00000020043"/>
<dbReference type="BindingDB" id="Q8CJ44"/>
<dbReference type="ChEMBL" id="CHEMBL3769295"/>
<dbReference type="GlyCosmos" id="Q8CJ44">
    <property type="glycosylation" value="2 sites, No reported glycans"/>
</dbReference>
<dbReference type="GlyGen" id="Q8CJ44">
    <property type="glycosylation" value="2 sites"/>
</dbReference>
<dbReference type="PhosphoSitePlus" id="Q8CJ44"/>
<dbReference type="PaxDb" id="10116-ENSRNOP00000020043"/>
<dbReference type="GeneID" id="266998"/>
<dbReference type="KEGG" id="rno:266998"/>
<dbReference type="AGR" id="RGD:631374"/>
<dbReference type="CTD" id="284111"/>
<dbReference type="RGD" id="631374">
    <property type="gene designation" value="Slc13a5"/>
</dbReference>
<dbReference type="eggNOG" id="KOG1281">
    <property type="taxonomic scope" value="Eukaryota"/>
</dbReference>
<dbReference type="HOGENOM" id="CLU_005170_9_1_1"/>
<dbReference type="InParanoid" id="Q8CJ44"/>
<dbReference type="OrthoDB" id="6493944at2759"/>
<dbReference type="PhylomeDB" id="Q8CJ44"/>
<dbReference type="TreeFam" id="TF312913"/>
<dbReference type="Reactome" id="R-RNO-433137">
    <property type="pathway name" value="Sodium-coupled sulphate, di- and tri-carboxylate transporters"/>
</dbReference>
<dbReference type="PRO" id="PR:Q8CJ44"/>
<dbReference type="Proteomes" id="UP000002494">
    <property type="component" value="Unplaced"/>
</dbReference>
<dbReference type="GO" id="GO:0016323">
    <property type="term" value="C:basolateral plasma membrane"/>
    <property type="evidence" value="ECO:0000314"/>
    <property type="project" value="RGD"/>
</dbReference>
<dbReference type="GO" id="GO:0005886">
    <property type="term" value="C:plasma membrane"/>
    <property type="evidence" value="ECO:0000266"/>
    <property type="project" value="RGD"/>
</dbReference>
<dbReference type="GO" id="GO:0015137">
    <property type="term" value="F:citrate transmembrane transporter activity"/>
    <property type="evidence" value="ECO:0000314"/>
    <property type="project" value="RGD"/>
</dbReference>
<dbReference type="GO" id="GO:0005343">
    <property type="term" value="F:organic acid:sodium symporter activity"/>
    <property type="evidence" value="ECO:0000314"/>
    <property type="project" value="RGD"/>
</dbReference>
<dbReference type="GO" id="GO:0017153">
    <property type="term" value="F:sodium:dicarboxylate symporter activity"/>
    <property type="evidence" value="ECO:0000314"/>
    <property type="project" value="RGD"/>
</dbReference>
<dbReference type="GO" id="GO:0015141">
    <property type="term" value="F:succinate transmembrane transporter activity"/>
    <property type="evidence" value="ECO:0000314"/>
    <property type="project" value="RGD"/>
</dbReference>
<dbReference type="GO" id="GO:0015142">
    <property type="term" value="F:tricarboxylic acid transmembrane transporter activity"/>
    <property type="evidence" value="ECO:0000266"/>
    <property type="project" value="RGD"/>
</dbReference>
<dbReference type="GO" id="GO:0015742">
    <property type="term" value="P:alpha-ketoglutarate transport"/>
    <property type="evidence" value="ECO:0000250"/>
    <property type="project" value="UniProtKB"/>
</dbReference>
<dbReference type="GO" id="GO:0071285">
    <property type="term" value="P:cellular response to lithium ion"/>
    <property type="evidence" value="ECO:0000250"/>
    <property type="project" value="UniProtKB"/>
</dbReference>
<dbReference type="GO" id="GO:0015746">
    <property type="term" value="P:citrate transport"/>
    <property type="evidence" value="ECO:0000314"/>
    <property type="project" value="RGD"/>
</dbReference>
<dbReference type="GO" id="GO:0015741">
    <property type="term" value="P:fumarate transport"/>
    <property type="evidence" value="ECO:0000250"/>
    <property type="project" value="UniProtKB"/>
</dbReference>
<dbReference type="GO" id="GO:0015729">
    <property type="term" value="P:oxaloacetate transport"/>
    <property type="evidence" value="ECO:0000250"/>
    <property type="project" value="UniProtKB"/>
</dbReference>
<dbReference type="GO" id="GO:0015744">
    <property type="term" value="P:succinate transport"/>
    <property type="evidence" value="ECO:0000314"/>
    <property type="project" value="RGD"/>
</dbReference>
<dbReference type="GO" id="GO:0055085">
    <property type="term" value="P:transmembrane transport"/>
    <property type="evidence" value="ECO:0000318"/>
    <property type="project" value="GO_Central"/>
</dbReference>
<dbReference type="GO" id="GO:0006842">
    <property type="term" value="P:tricarboxylic acid transport"/>
    <property type="evidence" value="ECO:0000266"/>
    <property type="project" value="RGD"/>
</dbReference>
<dbReference type="CDD" id="cd01115">
    <property type="entry name" value="SLC13_permease"/>
    <property type="match status" value="1"/>
</dbReference>
<dbReference type="InterPro" id="IPR031312">
    <property type="entry name" value="Na/sul_symport_CS"/>
</dbReference>
<dbReference type="InterPro" id="IPR001898">
    <property type="entry name" value="SLC13A/DASS"/>
</dbReference>
<dbReference type="PANTHER" id="PTHR10283:SF109">
    <property type="entry name" value="NA(+)_CITRATE COTRANSPORTER"/>
    <property type="match status" value="1"/>
</dbReference>
<dbReference type="PANTHER" id="PTHR10283">
    <property type="entry name" value="SOLUTE CARRIER FAMILY 13 MEMBER"/>
    <property type="match status" value="1"/>
</dbReference>
<dbReference type="Pfam" id="PF00939">
    <property type="entry name" value="Na_sulph_symp"/>
    <property type="match status" value="1"/>
</dbReference>
<dbReference type="PROSITE" id="PS01271">
    <property type="entry name" value="NA_SULFATE"/>
    <property type="match status" value="1"/>
</dbReference>
<sequence>MASAKTYVTKFKSFVILFFAPILLLPLIILVPDKFARCAYVIILMAIYWCTDVIPVAITSLLPVLLFPLLKVLDSKQVCVQYMTDTNMLFLGSLIVATAVERWELHKRIALRMLLFVGTKPSRLMLGFMFVTAFLSMWISNTATTAMMIPIVEAMLEQMVATNVAVDASQRTMELLDKNKASELPGSQVVFEDPSVQKQEDEETKNMYKAMNLCVCYAASIGGTATLTGTGPNVVLLGQMQELFPDSKDVMNFASWFAFALPNMLLMLVMAWLWLLCFYMRPNLKKTCICCGRKKKDTEKIASKVLYEEYRKLGPLSYAECNVLFCFGLLIILWFSRDPGFMPGWLSIAWIEGNTKHVTDATVAIFVAILLFIVPSQKPKFNFSRQTEEERKTPFYPPPLLNWKVTQEKVPWGIVLLLGGGFAMAKGCETSGLSEWMARQMEPLSSVRPAIITLILSCIVAMTTECTSNVATTTLFLPIFASMARSIGIHPLYVMIPCTLSASLAFMLPVATPPNAIVFAYGHLKVIDMVKTGLVMNILGIASVFLSVNTWGRAVFNLDKFPDWANLTHINT</sequence>
<name>S13A5_RAT</name>
<comment type="function">
    <text evidence="1 2 4 5 6">High-affinity sodium/citrate cotransporter that mediates citrate entry into cells, which is a critical participant of biochemical pathways (PubMed:12177002, PubMed:12826022, PubMed:14656221). May function in various metabolic processes in which citrate has a critical role such as energy production (Krebs cycle), fatty acid synthesis, cholesterol synthesis, glycolysis, and gluconeogenesis (By similarity). Transports citrate into the cell in a Na(+)-dependent manner, recognizing the trivalent form of citrate (physiological pH) rather than the divalent form (PubMed:12177002, PubMed:12826022, PubMed:14656221). Can recognize succinate as a substrate, but its affinity for succinate is several fold lower than for citrate (PubMed:12177002, PubMed:14656221). The stoichiometry is probably 4 Na(+) for each carboxylate, irrespective of whether the translocated substrate is divalent or trivalent, rendering the process electrogenic (PubMed:12177002, PubMed:14656221). Involved in the regulation of citrate levels in the brain (By similarity).</text>
</comment>
<comment type="catalytic activity">
    <reaction evidence="4 5 6">
        <text>citrate(out) + 4 Na(+)(out) = citrate(in) + 4 Na(+)(in)</text>
        <dbReference type="Rhea" id="RHEA:65664"/>
        <dbReference type="ChEBI" id="CHEBI:16947"/>
        <dbReference type="ChEBI" id="CHEBI:29101"/>
    </reaction>
</comment>
<comment type="activity regulation">
    <text evidence="5">Inhibited by Li(+).</text>
</comment>
<comment type="biophysicochemical properties">
    <kinetics>
        <KM evidence="4">20 uM for citrate</KM>
    </kinetics>
    <phDependence>
        <text evidence="4">Optimum pH is 7.0.</text>
    </phDependence>
</comment>
<comment type="subunit">
    <text evidence="2">Homodimer.</text>
</comment>
<comment type="subcellular location">
    <subcellularLocation>
        <location evidence="2">Cell membrane</location>
        <topology evidence="3">Multi-pass membrane protein</topology>
    </subcellularLocation>
</comment>
<comment type="tissue specificity">
    <text evidence="4">Expressed in liver, testis and brain.</text>
</comment>
<comment type="similarity">
    <text evidence="8">Belongs to the SLC13A/DASS transporter (TC 2.A.47) family. NADC subfamily.</text>
</comment>
<organism>
    <name type="scientific">Rattus norvegicus</name>
    <name type="common">Rat</name>
    <dbReference type="NCBI Taxonomy" id="10116"/>
    <lineage>
        <taxon>Eukaryota</taxon>
        <taxon>Metazoa</taxon>
        <taxon>Chordata</taxon>
        <taxon>Craniata</taxon>
        <taxon>Vertebrata</taxon>
        <taxon>Euteleostomi</taxon>
        <taxon>Mammalia</taxon>
        <taxon>Eutheria</taxon>
        <taxon>Euarchontoglires</taxon>
        <taxon>Glires</taxon>
        <taxon>Rodentia</taxon>
        <taxon>Myomorpha</taxon>
        <taxon>Muroidea</taxon>
        <taxon>Muridae</taxon>
        <taxon>Murinae</taxon>
        <taxon>Rattus</taxon>
    </lineage>
</organism>
<feature type="chain" id="PRO_0000260103" description="Na(+)/citrate cotransporter">
    <location>
        <begin position="1"/>
        <end position="572"/>
    </location>
</feature>
<feature type="transmembrane region" description="Helical" evidence="3">
    <location>
        <begin position="13"/>
        <end position="33"/>
    </location>
</feature>
<feature type="transmembrane region" description="Helical" evidence="3">
    <location>
        <begin position="53"/>
        <end position="73"/>
    </location>
</feature>
<feature type="transmembrane region" description="Helical" evidence="3">
    <location>
        <begin position="80"/>
        <end position="100"/>
    </location>
</feature>
<feature type="transmembrane region" description="Helical" evidence="3">
    <location>
        <begin position="124"/>
        <end position="144"/>
    </location>
</feature>
<feature type="transmembrane region" description="Helical" evidence="3">
    <location>
        <begin position="218"/>
        <end position="238"/>
    </location>
</feature>
<feature type="transmembrane region" description="Helical" evidence="3">
    <location>
        <begin position="255"/>
        <end position="275"/>
    </location>
</feature>
<feature type="transmembrane region" description="Helical" evidence="3">
    <location>
        <begin position="315"/>
        <end position="335"/>
    </location>
</feature>
<feature type="transmembrane region" description="Helical" evidence="3">
    <location>
        <begin position="357"/>
        <end position="377"/>
    </location>
</feature>
<feature type="transmembrane region" description="Helical" evidence="3">
    <location>
        <begin position="410"/>
        <end position="430"/>
    </location>
</feature>
<feature type="transmembrane region" description="Helical" evidence="3">
    <location>
        <begin position="443"/>
        <end position="463"/>
    </location>
</feature>
<feature type="transmembrane region" description="Helical" evidence="3">
    <location>
        <begin position="491"/>
        <end position="511"/>
    </location>
</feature>
<feature type="transmembrane region" description="Helical" evidence="3">
    <location>
        <begin position="532"/>
        <end position="552"/>
    </location>
</feature>
<feature type="glycosylation site" description="N-linked (GlcNAc...) asparagine" evidence="3">
    <location>
        <position position="382"/>
    </location>
</feature>
<feature type="glycosylation site" description="N-linked (GlcNAc...) asparagine" evidence="3">
    <location>
        <position position="566"/>
    </location>
</feature>
<gene>
    <name type="primary">Slc13a5</name>
    <name type="synonym">Nact</name>
</gene>
<protein>
    <recommendedName>
        <fullName>Na(+)/citrate cotransporter</fullName>
        <shortName evidence="7">NaCT</shortName>
    </recommendedName>
    <alternativeName>
        <fullName evidence="7">Sodium-coupled citrate transporter</fullName>
    </alternativeName>
    <alternativeName>
        <fullName>Sodium-dependent citrate transporter</fullName>
    </alternativeName>
    <alternativeName>
        <fullName>Solute carrier family 13 member 5</fullName>
    </alternativeName>
</protein>
<reference key="1">
    <citation type="journal article" date="2002" name="J. Biol. Chem.">
        <title>Structure, function, and expression pattern of a novel sodium-coupled citrate transporter (NaCT) cloned from mammalian brain.</title>
        <authorList>
            <person name="Inoue K."/>
            <person name="Zhuang L."/>
            <person name="Maddox D.M."/>
            <person name="Smith S.B."/>
            <person name="Ganapathy V."/>
        </authorList>
    </citation>
    <scope>NUCLEOTIDE SEQUENCE [MRNA]</scope>
    <scope>FUNCTION</scope>
    <scope>TISSUE SPECIFICITY</scope>
    <scope>TRANSPORTER ACTIVITY</scope>
    <scope>BIOPHYSICOCHEMICAL PROPERTIES</scope>
    <source>
        <strain>Sprague-Dawley</strain>
        <tissue>Brain</tissue>
    </source>
</reference>
<reference key="2">
    <citation type="journal article" date="2003" name="Biochem. J.">
        <title>Human sodium-coupled citrate transporter, the orthologue of Drosophila Indy, as a novel target for lithium action.</title>
        <authorList>
            <person name="Inoue K."/>
            <person name="Zhuang L."/>
            <person name="Maddox D.M."/>
            <person name="Smith S.B."/>
            <person name="Ganapathy V."/>
        </authorList>
    </citation>
    <scope>FUNCTION</scope>
    <scope>TRANSPORT ACTIVITY</scope>
    <scope>ACTIVITY REGULATION</scope>
</reference>
<reference key="3">
    <citation type="journal article" date="2004" name="Biochem. J.">
        <title>Functional features and genomic organization of mouse NaCT, a sodium-coupled transporter for tricarboxylic acid cycle intermediates.</title>
        <authorList>
            <person name="Inoue K."/>
            <person name="Fei Y.J."/>
            <person name="Zhuang L."/>
            <person name="Gopal E."/>
            <person name="Miyauchi S."/>
            <person name="Ganapathy V."/>
        </authorList>
    </citation>
    <scope>FUNCTION</scope>
    <scope>TRANSPORT ACTIVITY</scope>
</reference>
<evidence type="ECO:0000250" key="1">
    <source>
        <dbReference type="UniProtKB" id="Q67BT3"/>
    </source>
</evidence>
<evidence type="ECO:0000250" key="2">
    <source>
        <dbReference type="UniProtKB" id="Q86YT5"/>
    </source>
</evidence>
<evidence type="ECO:0000255" key="3"/>
<evidence type="ECO:0000269" key="4">
    <source>
    </source>
</evidence>
<evidence type="ECO:0000269" key="5">
    <source>
    </source>
</evidence>
<evidence type="ECO:0000269" key="6">
    <source>
    </source>
</evidence>
<evidence type="ECO:0000303" key="7">
    <source>
    </source>
</evidence>
<evidence type="ECO:0000305" key="8"/>
<accession>Q8CJ44</accession>
<proteinExistence type="evidence at protein level"/>